<organism>
    <name type="scientific">Trichophyton equinum</name>
    <name type="common">Horse ringworm fungus</name>
    <dbReference type="NCBI Taxonomy" id="63418"/>
    <lineage>
        <taxon>Eukaryota</taxon>
        <taxon>Fungi</taxon>
        <taxon>Dikarya</taxon>
        <taxon>Ascomycota</taxon>
        <taxon>Pezizomycotina</taxon>
        <taxon>Eurotiomycetes</taxon>
        <taxon>Eurotiomycetidae</taxon>
        <taxon>Onygenales</taxon>
        <taxon>Arthrodermataceae</taxon>
        <taxon>Trichophyton</taxon>
    </lineage>
</organism>
<reference key="1">
    <citation type="submission" date="2008-10" db="EMBL/GenBank/DDBJ databases">
        <title>Comparing putative pathogenicity factors between Trichophyton tonsurans and Trichophyton equinum.</title>
        <authorList>
            <person name="Preuett B.L."/>
            <person name="Abdel-Rahman S.M."/>
        </authorList>
    </citation>
    <scope>NUCLEOTIDE SEQUENCE [GENOMIC DNA]</scope>
</reference>
<proteinExistence type="inferred from homology"/>
<comment type="function">
    <text evidence="1">Secreted subtilisin-like serine protease with keratinolytic activity that contributes to pathogenicity.</text>
</comment>
<comment type="subcellular location">
    <subcellularLocation>
        <location evidence="1">Secreted</location>
    </subcellularLocation>
</comment>
<comment type="similarity">
    <text evidence="4">Belongs to the peptidase S8 family.</text>
</comment>
<name>SUB3_TRIEQ</name>
<evidence type="ECO:0000250" key="1"/>
<evidence type="ECO:0000255" key="2"/>
<evidence type="ECO:0000255" key="3">
    <source>
        <dbReference type="PROSITE-ProRule" id="PRU01240"/>
    </source>
</evidence>
<evidence type="ECO:0000305" key="4"/>
<dbReference type="EC" id="3.4.21.-"/>
<dbReference type="EMBL" id="FJ356724">
    <property type="protein sequence ID" value="ACJ04079.1"/>
    <property type="molecule type" value="Genomic_DNA"/>
</dbReference>
<dbReference type="SMR" id="B6VA86"/>
<dbReference type="MEROPS" id="S08.115"/>
<dbReference type="GlyCosmos" id="B6VA86">
    <property type="glycosylation" value="2 sites, No reported glycans"/>
</dbReference>
<dbReference type="VEuPathDB" id="FungiDB:TEQG_06704"/>
<dbReference type="GO" id="GO:0005576">
    <property type="term" value="C:extracellular region"/>
    <property type="evidence" value="ECO:0007669"/>
    <property type="project" value="UniProtKB-SubCell"/>
</dbReference>
<dbReference type="GO" id="GO:0004252">
    <property type="term" value="F:serine-type endopeptidase activity"/>
    <property type="evidence" value="ECO:0007669"/>
    <property type="project" value="InterPro"/>
</dbReference>
<dbReference type="GO" id="GO:0006508">
    <property type="term" value="P:proteolysis"/>
    <property type="evidence" value="ECO:0007669"/>
    <property type="project" value="UniProtKB-KW"/>
</dbReference>
<dbReference type="CDD" id="cd04077">
    <property type="entry name" value="Peptidases_S8_PCSK9_ProteinaseK_like"/>
    <property type="match status" value="1"/>
</dbReference>
<dbReference type="FunFam" id="3.40.50.200:FF:000014">
    <property type="entry name" value="Proteinase K"/>
    <property type="match status" value="1"/>
</dbReference>
<dbReference type="Gene3D" id="3.30.70.80">
    <property type="entry name" value="Peptidase S8 propeptide/proteinase inhibitor I9"/>
    <property type="match status" value="1"/>
</dbReference>
<dbReference type="Gene3D" id="3.40.50.200">
    <property type="entry name" value="Peptidase S8/S53 domain"/>
    <property type="match status" value="1"/>
</dbReference>
<dbReference type="InterPro" id="IPR034193">
    <property type="entry name" value="PCSK9_ProteinaseK-like"/>
</dbReference>
<dbReference type="InterPro" id="IPR000209">
    <property type="entry name" value="Peptidase_S8/S53_dom"/>
</dbReference>
<dbReference type="InterPro" id="IPR036852">
    <property type="entry name" value="Peptidase_S8/S53_dom_sf"/>
</dbReference>
<dbReference type="InterPro" id="IPR023828">
    <property type="entry name" value="Peptidase_S8_Ser-AS"/>
</dbReference>
<dbReference type="InterPro" id="IPR050131">
    <property type="entry name" value="Peptidase_S8_subtilisin-like"/>
</dbReference>
<dbReference type="InterPro" id="IPR015500">
    <property type="entry name" value="Peptidase_S8_subtilisin-rel"/>
</dbReference>
<dbReference type="InterPro" id="IPR010259">
    <property type="entry name" value="S8pro/Inhibitor_I9"/>
</dbReference>
<dbReference type="InterPro" id="IPR037045">
    <property type="entry name" value="S8pro/Inhibitor_I9_sf"/>
</dbReference>
<dbReference type="PANTHER" id="PTHR43806:SF11">
    <property type="entry name" value="CEREVISIN-RELATED"/>
    <property type="match status" value="1"/>
</dbReference>
<dbReference type="PANTHER" id="PTHR43806">
    <property type="entry name" value="PEPTIDASE S8"/>
    <property type="match status" value="1"/>
</dbReference>
<dbReference type="Pfam" id="PF05922">
    <property type="entry name" value="Inhibitor_I9"/>
    <property type="match status" value="1"/>
</dbReference>
<dbReference type="Pfam" id="PF00082">
    <property type="entry name" value="Peptidase_S8"/>
    <property type="match status" value="1"/>
</dbReference>
<dbReference type="PRINTS" id="PR00723">
    <property type="entry name" value="SUBTILISIN"/>
</dbReference>
<dbReference type="SUPFAM" id="SSF54897">
    <property type="entry name" value="Protease propeptides/inhibitors"/>
    <property type="match status" value="1"/>
</dbReference>
<dbReference type="SUPFAM" id="SSF52743">
    <property type="entry name" value="Subtilisin-like"/>
    <property type="match status" value="1"/>
</dbReference>
<dbReference type="PROSITE" id="PS51892">
    <property type="entry name" value="SUBTILASE"/>
    <property type="match status" value="1"/>
</dbReference>
<dbReference type="PROSITE" id="PS00138">
    <property type="entry name" value="SUBTILASE_SER"/>
    <property type="match status" value="1"/>
</dbReference>
<protein>
    <recommendedName>
        <fullName>Subtilisin-like protease 3</fullName>
        <ecNumber>3.4.21.-</ecNumber>
    </recommendedName>
</protein>
<sequence length="397" mass="41230">MGCIKVISVFLAAIAAVDARAFFHNRGGSDVIPNSYIVVMKDGVTTEDFDSHISTVAATHNLNKAKRGSETVGHKDSFNINGWRAYNGHFDEATIESILNDDKVNYVEHDRVVKLAALVTQPNAPTWGLGRVSHRAPGNRDFVYDSSAGQGITIYGVDTGIDIRHPEFAGRIRWGTNTVDNDNTDGNGHGTHTAGTFAGTTYGVAKKANIVAVKVLSAGGSGSTAGVIKGIDWCVTDARSRNALGKAALNLSLGGSFSQANNDAVTRAQEAGIFVAVAAGNDNRDARNYSPASAPAVCTAASSTIDDQKSSFSNWGSIVDIYAPGSSILSAAPGGGTRTLSGTSMASPHVCGVGAAMLAQGVSVAQVCNRLKQIGNAVIRNPGTSTTNRLLYNGSGQ</sequence>
<accession>B6VA86</accession>
<gene>
    <name type="primary">SUB3</name>
</gene>
<keyword id="KW-0325">Glycoprotein</keyword>
<keyword id="KW-0378">Hydrolase</keyword>
<keyword id="KW-0645">Protease</keyword>
<keyword id="KW-0964">Secreted</keyword>
<keyword id="KW-0720">Serine protease</keyword>
<keyword id="KW-0732">Signal</keyword>
<keyword id="KW-0843">Virulence</keyword>
<keyword id="KW-0865">Zymogen</keyword>
<feature type="signal peptide" evidence="2">
    <location>
        <begin position="1"/>
        <end position="19"/>
    </location>
</feature>
<feature type="propeptide" id="PRO_0000380778" evidence="1">
    <location>
        <begin position="20"/>
        <end position="116"/>
    </location>
</feature>
<feature type="chain" id="PRO_0000380779" description="Subtilisin-like protease 3">
    <location>
        <begin position="117"/>
        <end position="397"/>
    </location>
</feature>
<feature type="domain" description="Inhibitor I9" evidence="2">
    <location>
        <begin position="35"/>
        <end position="116"/>
    </location>
</feature>
<feature type="domain" description="Peptidase S8" evidence="3">
    <location>
        <begin position="126"/>
        <end position="397"/>
    </location>
</feature>
<feature type="active site" description="Charge relay system" evidence="3">
    <location>
        <position position="158"/>
    </location>
</feature>
<feature type="active site" description="Charge relay system" evidence="3">
    <location>
        <position position="189"/>
    </location>
</feature>
<feature type="active site" description="Charge relay system" evidence="3">
    <location>
        <position position="344"/>
    </location>
</feature>
<feature type="glycosylation site" description="N-linked (GlcNAc...) asparagine" evidence="2">
    <location>
        <position position="250"/>
    </location>
</feature>
<feature type="glycosylation site" description="N-linked (GlcNAc...) asparagine" evidence="2">
    <location>
        <position position="393"/>
    </location>
</feature>